<organism>
    <name type="scientific">Staphylococcus epidermidis (strain ATCC 12228 / FDA PCI 1200)</name>
    <dbReference type="NCBI Taxonomy" id="176280"/>
    <lineage>
        <taxon>Bacteria</taxon>
        <taxon>Bacillati</taxon>
        <taxon>Bacillota</taxon>
        <taxon>Bacilli</taxon>
        <taxon>Bacillales</taxon>
        <taxon>Staphylococcaceae</taxon>
        <taxon>Staphylococcus</taxon>
    </lineage>
</organism>
<sequence>MARKQVSRKRRVKKNIENGVAHIRSTFNNTIVTITDEFGNALSWSSAGALGFKGSKKSTPFAAQMASETASKTAMEHGLKTVEVTVKGPGPGRESAIRALQSAGLEVTAIRDVTPVPHNGCRPPKRRRV</sequence>
<accession>P59377</accession>
<dbReference type="EMBL" id="AE015929">
    <property type="protein sequence ID" value="AAO05439.1"/>
    <property type="molecule type" value="Genomic_DNA"/>
</dbReference>
<dbReference type="RefSeq" id="NP_765353.1">
    <property type="nucleotide sequence ID" value="NC_004461.1"/>
</dbReference>
<dbReference type="RefSeq" id="WP_001829725.1">
    <property type="nucleotide sequence ID" value="NZ_WBME01000007.1"/>
</dbReference>
<dbReference type="SMR" id="P59377"/>
<dbReference type="GeneID" id="50018098"/>
<dbReference type="KEGG" id="sep:SE_1798"/>
<dbReference type="PATRIC" id="fig|176280.10.peg.1755"/>
<dbReference type="eggNOG" id="COG0100">
    <property type="taxonomic scope" value="Bacteria"/>
</dbReference>
<dbReference type="HOGENOM" id="CLU_072439_5_0_9"/>
<dbReference type="OrthoDB" id="9806415at2"/>
<dbReference type="Proteomes" id="UP000001411">
    <property type="component" value="Chromosome"/>
</dbReference>
<dbReference type="GO" id="GO:1990904">
    <property type="term" value="C:ribonucleoprotein complex"/>
    <property type="evidence" value="ECO:0007669"/>
    <property type="project" value="UniProtKB-KW"/>
</dbReference>
<dbReference type="GO" id="GO:0005840">
    <property type="term" value="C:ribosome"/>
    <property type="evidence" value="ECO:0007669"/>
    <property type="project" value="UniProtKB-KW"/>
</dbReference>
<dbReference type="GO" id="GO:0019843">
    <property type="term" value="F:rRNA binding"/>
    <property type="evidence" value="ECO:0007669"/>
    <property type="project" value="UniProtKB-UniRule"/>
</dbReference>
<dbReference type="GO" id="GO:0003735">
    <property type="term" value="F:structural constituent of ribosome"/>
    <property type="evidence" value="ECO:0007669"/>
    <property type="project" value="InterPro"/>
</dbReference>
<dbReference type="GO" id="GO:0006412">
    <property type="term" value="P:translation"/>
    <property type="evidence" value="ECO:0007669"/>
    <property type="project" value="UniProtKB-UniRule"/>
</dbReference>
<dbReference type="FunFam" id="3.30.420.80:FF:000001">
    <property type="entry name" value="30S ribosomal protein S11"/>
    <property type="match status" value="1"/>
</dbReference>
<dbReference type="Gene3D" id="3.30.420.80">
    <property type="entry name" value="Ribosomal protein S11"/>
    <property type="match status" value="1"/>
</dbReference>
<dbReference type="HAMAP" id="MF_01310">
    <property type="entry name" value="Ribosomal_uS11"/>
    <property type="match status" value="1"/>
</dbReference>
<dbReference type="InterPro" id="IPR001971">
    <property type="entry name" value="Ribosomal_uS11"/>
</dbReference>
<dbReference type="InterPro" id="IPR019981">
    <property type="entry name" value="Ribosomal_uS11_bac-type"/>
</dbReference>
<dbReference type="InterPro" id="IPR018102">
    <property type="entry name" value="Ribosomal_uS11_CS"/>
</dbReference>
<dbReference type="InterPro" id="IPR036967">
    <property type="entry name" value="Ribosomal_uS11_sf"/>
</dbReference>
<dbReference type="NCBIfam" id="NF003698">
    <property type="entry name" value="PRK05309.1"/>
    <property type="match status" value="1"/>
</dbReference>
<dbReference type="NCBIfam" id="TIGR03632">
    <property type="entry name" value="uS11_bact"/>
    <property type="match status" value="1"/>
</dbReference>
<dbReference type="PANTHER" id="PTHR11759">
    <property type="entry name" value="40S RIBOSOMAL PROTEIN S14/30S RIBOSOMAL PROTEIN S11"/>
    <property type="match status" value="1"/>
</dbReference>
<dbReference type="Pfam" id="PF00411">
    <property type="entry name" value="Ribosomal_S11"/>
    <property type="match status" value="1"/>
</dbReference>
<dbReference type="PIRSF" id="PIRSF002131">
    <property type="entry name" value="Ribosomal_S11"/>
    <property type="match status" value="1"/>
</dbReference>
<dbReference type="SUPFAM" id="SSF53137">
    <property type="entry name" value="Translational machinery components"/>
    <property type="match status" value="1"/>
</dbReference>
<dbReference type="PROSITE" id="PS00054">
    <property type="entry name" value="RIBOSOMAL_S11"/>
    <property type="match status" value="1"/>
</dbReference>
<name>RS11_STAES</name>
<gene>
    <name evidence="1" type="primary">rpsK</name>
    <name type="ordered locus">SE_1798</name>
</gene>
<keyword id="KW-0687">Ribonucleoprotein</keyword>
<keyword id="KW-0689">Ribosomal protein</keyword>
<keyword id="KW-0694">RNA-binding</keyword>
<keyword id="KW-0699">rRNA-binding</keyword>
<reference key="1">
    <citation type="journal article" date="2003" name="Mol. Microbiol.">
        <title>Genome-based analysis of virulence genes in a non-biofilm-forming Staphylococcus epidermidis strain (ATCC 12228).</title>
        <authorList>
            <person name="Zhang Y.-Q."/>
            <person name="Ren S.-X."/>
            <person name="Li H.-L."/>
            <person name="Wang Y.-X."/>
            <person name="Fu G."/>
            <person name="Yang J."/>
            <person name="Qin Z.-Q."/>
            <person name="Miao Y.-G."/>
            <person name="Wang W.-Y."/>
            <person name="Chen R.-S."/>
            <person name="Shen Y."/>
            <person name="Chen Z."/>
            <person name="Yuan Z.-H."/>
            <person name="Zhao G.-P."/>
            <person name="Qu D."/>
            <person name="Danchin A."/>
            <person name="Wen Y.-M."/>
        </authorList>
    </citation>
    <scope>NUCLEOTIDE SEQUENCE [LARGE SCALE GENOMIC DNA]</scope>
    <source>
        <strain>ATCC 12228 / FDA PCI 1200</strain>
    </source>
</reference>
<feature type="chain" id="PRO_0000123224" description="Small ribosomal subunit protein uS11">
    <location>
        <begin position="1"/>
        <end position="129"/>
    </location>
</feature>
<proteinExistence type="inferred from homology"/>
<comment type="function">
    <text evidence="1">Located on the platform of the 30S subunit, it bridges several disparate RNA helices of the 16S rRNA. Forms part of the Shine-Dalgarno cleft in the 70S ribosome.</text>
</comment>
<comment type="subunit">
    <text evidence="1">Part of the 30S ribosomal subunit. Interacts with proteins S7 and S18. Binds to IF-3.</text>
</comment>
<comment type="similarity">
    <text evidence="1">Belongs to the universal ribosomal protein uS11 family.</text>
</comment>
<protein>
    <recommendedName>
        <fullName evidence="1">Small ribosomal subunit protein uS11</fullName>
    </recommendedName>
    <alternativeName>
        <fullName evidence="2">30S ribosomal protein S11</fullName>
    </alternativeName>
</protein>
<evidence type="ECO:0000255" key="1">
    <source>
        <dbReference type="HAMAP-Rule" id="MF_01310"/>
    </source>
</evidence>
<evidence type="ECO:0000305" key="2"/>